<name>RNAS1_MIOTA</name>
<dbReference type="EC" id="4.6.1.18"/>
<dbReference type="EMBL" id="AF449636">
    <property type="protein sequence ID" value="AAL87057.1"/>
    <property type="molecule type" value="Genomic_DNA"/>
</dbReference>
<dbReference type="SMR" id="P61822"/>
<dbReference type="GlyCosmos" id="P61822">
    <property type="glycosylation" value="2 sites, No reported glycans"/>
</dbReference>
<dbReference type="GO" id="GO:0005576">
    <property type="term" value="C:extracellular region"/>
    <property type="evidence" value="ECO:0007669"/>
    <property type="project" value="UniProtKB-SubCell"/>
</dbReference>
<dbReference type="GO" id="GO:0016829">
    <property type="term" value="F:lyase activity"/>
    <property type="evidence" value="ECO:0007669"/>
    <property type="project" value="UniProtKB-KW"/>
</dbReference>
<dbReference type="GO" id="GO:0003676">
    <property type="term" value="F:nucleic acid binding"/>
    <property type="evidence" value="ECO:0007669"/>
    <property type="project" value="InterPro"/>
</dbReference>
<dbReference type="GO" id="GO:0004522">
    <property type="term" value="F:ribonuclease A activity"/>
    <property type="evidence" value="ECO:0007669"/>
    <property type="project" value="UniProtKB-EC"/>
</dbReference>
<dbReference type="GO" id="GO:0050830">
    <property type="term" value="P:defense response to Gram-positive bacterium"/>
    <property type="evidence" value="ECO:0007669"/>
    <property type="project" value="TreeGrafter"/>
</dbReference>
<dbReference type="CDD" id="cd06265">
    <property type="entry name" value="RNase_A_canonical"/>
    <property type="match status" value="1"/>
</dbReference>
<dbReference type="FunFam" id="3.10.130.10:FF:000001">
    <property type="entry name" value="Ribonuclease pancreatic"/>
    <property type="match status" value="1"/>
</dbReference>
<dbReference type="Gene3D" id="3.10.130.10">
    <property type="entry name" value="Ribonuclease A-like domain"/>
    <property type="match status" value="1"/>
</dbReference>
<dbReference type="InterPro" id="IPR001427">
    <property type="entry name" value="RNaseA"/>
</dbReference>
<dbReference type="InterPro" id="IPR036816">
    <property type="entry name" value="RNaseA-like_dom_sf"/>
</dbReference>
<dbReference type="InterPro" id="IPR023411">
    <property type="entry name" value="RNaseA_AS"/>
</dbReference>
<dbReference type="InterPro" id="IPR023412">
    <property type="entry name" value="RNaseA_domain"/>
</dbReference>
<dbReference type="PANTHER" id="PTHR11437">
    <property type="entry name" value="RIBONUCLEASE"/>
    <property type="match status" value="1"/>
</dbReference>
<dbReference type="PANTHER" id="PTHR11437:SF24">
    <property type="entry name" value="RIBONUCLEASE PANCREATIC"/>
    <property type="match status" value="1"/>
</dbReference>
<dbReference type="Pfam" id="PF00074">
    <property type="entry name" value="RnaseA"/>
    <property type="match status" value="1"/>
</dbReference>
<dbReference type="PRINTS" id="PR00794">
    <property type="entry name" value="RIBONUCLEASE"/>
</dbReference>
<dbReference type="SMART" id="SM00092">
    <property type="entry name" value="RNAse_Pc"/>
    <property type="match status" value="1"/>
</dbReference>
<dbReference type="SUPFAM" id="SSF54076">
    <property type="entry name" value="RNase A-like"/>
    <property type="match status" value="1"/>
</dbReference>
<dbReference type="PROSITE" id="PS00127">
    <property type="entry name" value="RNASE_PANCREATIC"/>
    <property type="match status" value="1"/>
</dbReference>
<feature type="signal peptide" evidence="1">
    <location>
        <begin position="1"/>
        <end position="24"/>
    </location>
</feature>
<feature type="chain" id="PRO_0000030928" description="Ribonuclease pancreatic">
    <location>
        <begin position="25"/>
        <end position="152"/>
    </location>
</feature>
<feature type="active site" description="Proton acceptor" evidence="1">
    <location>
        <position position="36"/>
    </location>
</feature>
<feature type="active site" description="Proton donor" evidence="1">
    <location>
        <position position="143"/>
    </location>
</feature>
<feature type="binding site" evidence="1">
    <location>
        <position position="31"/>
    </location>
    <ligand>
        <name>substrate</name>
    </ligand>
</feature>
<feature type="binding site" evidence="1">
    <location>
        <position position="34"/>
    </location>
    <ligand>
        <name>substrate</name>
    </ligand>
</feature>
<feature type="binding site" evidence="1">
    <location>
        <begin position="65"/>
        <end position="69"/>
    </location>
    <ligand>
        <name>substrate</name>
    </ligand>
</feature>
<feature type="binding site" evidence="1">
    <location>
        <position position="90"/>
    </location>
    <ligand>
        <name>substrate</name>
    </ligand>
</feature>
<feature type="binding site" evidence="1">
    <location>
        <position position="109"/>
    </location>
    <ligand>
        <name>substrate</name>
    </ligand>
</feature>
<feature type="glycosylation site" description="N-linked (GlcNAc...) asparagine" evidence="2">
    <location>
        <position position="46"/>
    </location>
</feature>
<feature type="glycosylation site" description="N-linked (GlcNAc...) asparagine" evidence="2">
    <location>
        <position position="112"/>
    </location>
</feature>
<feature type="disulfide bond" evidence="1">
    <location>
        <begin position="50"/>
        <end position="108"/>
    </location>
</feature>
<feature type="disulfide bond" evidence="1">
    <location>
        <begin position="64"/>
        <end position="119"/>
    </location>
</feature>
<feature type="disulfide bond" evidence="1">
    <location>
        <begin position="82"/>
        <end position="134"/>
    </location>
</feature>
<feature type="disulfide bond" evidence="1">
    <location>
        <begin position="89"/>
        <end position="96"/>
    </location>
</feature>
<proteinExistence type="inferred from homology"/>
<comment type="function">
    <text evidence="1">Endonuclease that catalyzes the cleavage of RNA on the 3' side of pyrimidine nucleotides. Acts on single-stranded and double-stranded RNA (By similarity).</text>
</comment>
<comment type="catalytic activity">
    <reaction>
        <text>an [RNA] containing cytidine + H2O = an [RNA]-3'-cytidine-3'-phosphate + a 5'-hydroxy-ribonucleotide-3'-[RNA].</text>
        <dbReference type="EC" id="4.6.1.18"/>
    </reaction>
</comment>
<comment type="catalytic activity">
    <reaction>
        <text>an [RNA] containing uridine + H2O = an [RNA]-3'-uridine-3'-phosphate + a 5'-hydroxy-ribonucleotide-3'-[RNA].</text>
        <dbReference type="EC" id="4.6.1.18"/>
    </reaction>
</comment>
<comment type="subunit">
    <text evidence="1">Monomer. Interacts with and forms tight 1:1 complexes with RNH1. Dimerization of two such complexes may occur. Interaction with RNH1 inhibits this protein (By similarity).</text>
</comment>
<comment type="subcellular location">
    <subcellularLocation>
        <location evidence="1">Secreted</location>
    </subcellularLocation>
</comment>
<comment type="similarity">
    <text evidence="3">Belongs to the pancreatic ribonuclease family.</text>
</comment>
<evidence type="ECO:0000250" key="1"/>
<evidence type="ECO:0000255" key="2"/>
<evidence type="ECO:0000305" key="3"/>
<reference key="1">
    <citation type="journal article" date="2002" name="Nat. Genet.">
        <title>Adaptive evolution of a duplicated pancreatic ribonuclease gene in a leaf-eating monkey.</title>
        <authorList>
            <person name="Zhang J."/>
            <person name="Zhang Y.-P."/>
            <person name="Rosenberg H.F."/>
        </authorList>
    </citation>
    <scope>NUCLEOTIDE SEQUENCE [GENOMIC DNA]</scope>
</reference>
<sequence length="152" mass="17066">MALDKSVILLPLLVLVLLVLGCLGRESRAKKFQRQHMDSGSSPSSNSTYCNQMMKRRSMTQGRCKPVNTFVHEPLVDVQNVCFQEKVTCKNGQTNCFKSKSSMHITDCRLTNGSRYPNCAYRTSPKERRIIVACEGSPYVPVHFDASVEDST</sequence>
<protein>
    <recommendedName>
        <fullName>Ribonuclease pancreatic</fullName>
        <ecNumber>4.6.1.18</ecNumber>
    </recommendedName>
    <alternativeName>
        <fullName>RNase 1</fullName>
    </alternativeName>
    <alternativeName>
        <fullName>RNase A</fullName>
    </alternativeName>
</protein>
<keyword id="KW-1015">Disulfide bond</keyword>
<keyword id="KW-0255">Endonuclease</keyword>
<keyword id="KW-0325">Glycoprotein</keyword>
<keyword id="KW-0378">Hydrolase</keyword>
<keyword id="KW-0456">Lyase</keyword>
<keyword id="KW-0540">Nuclease</keyword>
<keyword id="KW-0964">Secreted</keyword>
<keyword id="KW-0732">Signal</keyword>
<gene>
    <name type="primary">RNASE1</name>
    <name type="synonym">RNS1</name>
</gene>
<organism>
    <name type="scientific">Miopithecus talapoin</name>
    <name type="common">Angolan talapoin</name>
    <name type="synonym">Cercopithecus talapoin</name>
    <dbReference type="NCBI Taxonomy" id="36231"/>
    <lineage>
        <taxon>Eukaryota</taxon>
        <taxon>Metazoa</taxon>
        <taxon>Chordata</taxon>
        <taxon>Craniata</taxon>
        <taxon>Vertebrata</taxon>
        <taxon>Euteleostomi</taxon>
        <taxon>Mammalia</taxon>
        <taxon>Eutheria</taxon>
        <taxon>Euarchontoglires</taxon>
        <taxon>Primates</taxon>
        <taxon>Haplorrhini</taxon>
        <taxon>Catarrhini</taxon>
        <taxon>Cercopithecidae</taxon>
        <taxon>Cercopithecinae</taxon>
        <taxon>Miopithecus</taxon>
    </lineage>
</organism>
<accession>P61822</accession>
<accession>Q8SPF2</accession>